<protein>
    <recommendedName>
        <fullName evidence="1">GTP cyclohydrolase FolE2</fullName>
        <ecNumber evidence="1">3.5.4.16</ecNumber>
    </recommendedName>
</protein>
<gene>
    <name evidence="1" type="primary">folE2</name>
    <name type="ordered locus">DvMF_1321</name>
</gene>
<proteinExistence type="inferred from homology"/>
<dbReference type="EC" id="3.5.4.16" evidence="1"/>
<dbReference type="EMBL" id="CP001197">
    <property type="protein sequence ID" value="ACL08270.1"/>
    <property type="molecule type" value="Genomic_DNA"/>
</dbReference>
<dbReference type="SMR" id="B8DLK8"/>
<dbReference type="STRING" id="883.DvMF_1321"/>
<dbReference type="KEGG" id="dvm:DvMF_1321"/>
<dbReference type="eggNOG" id="COG1469">
    <property type="taxonomic scope" value="Bacteria"/>
</dbReference>
<dbReference type="HOGENOM" id="CLU_062816_1_1_7"/>
<dbReference type="OrthoDB" id="9774824at2"/>
<dbReference type="UniPathway" id="UPA00848">
    <property type="reaction ID" value="UER00151"/>
</dbReference>
<dbReference type="GO" id="GO:0003934">
    <property type="term" value="F:GTP cyclohydrolase I activity"/>
    <property type="evidence" value="ECO:0007669"/>
    <property type="project" value="UniProtKB-UniRule"/>
</dbReference>
<dbReference type="GO" id="GO:0046654">
    <property type="term" value="P:tetrahydrofolate biosynthetic process"/>
    <property type="evidence" value="ECO:0007669"/>
    <property type="project" value="UniProtKB-UniRule"/>
</dbReference>
<dbReference type="Gene3D" id="3.10.270.10">
    <property type="entry name" value="Urate Oxidase"/>
    <property type="match status" value="1"/>
</dbReference>
<dbReference type="HAMAP" id="MF_01527_B">
    <property type="entry name" value="GTP_cyclohydrol_B"/>
    <property type="match status" value="1"/>
</dbReference>
<dbReference type="InterPro" id="IPR022838">
    <property type="entry name" value="GTP_cyclohydrolase_FolE2"/>
</dbReference>
<dbReference type="InterPro" id="IPR003801">
    <property type="entry name" value="GTP_cyclohydrolase_FolE2/MptA"/>
</dbReference>
<dbReference type="NCBIfam" id="NF010200">
    <property type="entry name" value="PRK13674.1-1"/>
    <property type="match status" value="1"/>
</dbReference>
<dbReference type="PANTHER" id="PTHR36445">
    <property type="entry name" value="GTP CYCLOHYDROLASE MPTA"/>
    <property type="match status" value="1"/>
</dbReference>
<dbReference type="PANTHER" id="PTHR36445:SF1">
    <property type="entry name" value="GTP CYCLOHYDROLASE MPTA"/>
    <property type="match status" value="1"/>
</dbReference>
<dbReference type="Pfam" id="PF02649">
    <property type="entry name" value="GCHY-1"/>
    <property type="match status" value="1"/>
</dbReference>
<feature type="chain" id="PRO_1000185152" description="GTP cyclohydrolase FolE2">
    <location>
        <begin position="1"/>
        <end position="259"/>
    </location>
</feature>
<feature type="site" description="May be catalytically important" evidence="1">
    <location>
        <position position="145"/>
    </location>
</feature>
<keyword id="KW-0378">Hydrolase</keyword>
<evidence type="ECO:0000255" key="1">
    <source>
        <dbReference type="HAMAP-Rule" id="MF_01527"/>
    </source>
</evidence>
<sequence>MEDVQNSPAQVAMPIDRVGVKNLKLPLVVRDRAQGSQHTVATVDIGVDLPAEFKGTHMSRFVEALENWSEELDYNSMKRLLEDVKERLHARKAYALFRFPYFVRKGAPATASSGLVWYECRLTGELGDGKPSFLLELEVPVMTVCPCSKAISDEGAHSQRAVVRMSIRMTGFSWMEEFIDLAEAAGSSPVYTLLKREDEKFVTEDAFAHPTFVEDVVRAAAQRLEGHPHVAWFRVEVESFESIHCHNAFASIEREVRKG</sequence>
<organism>
    <name type="scientific">Nitratidesulfovibrio vulgaris (strain DSM 19637 / Miyazaki F)</name>
    <name type="common">Desulfovibrio vulgaris</name>
    <dbReference type="NCBI Taxonomy" id="883"/>
    <lineage>
        <taxon>Bacteria</taxon>
        <taxon>Pseudomonadati</taxon>
        <taxon>Thermodesulfobacteriota</taxon>
        <taxon>Desulfovibrionia</taxon>
        <taxon>Desulfovibrionales</taxon>
        <taxon>Desulfovibrionaceae</taxon>
        <taxon>Nitratidesulfovibrio</taxon>
    </lineage>
</organism>
<accession>B8DLK8</accession>
<comment type="function">
    <text evidence="1">Converts GTP to 7,8-dihydroneopterin triphosphate.</text>
</comment>
<comment type="catalytic activity">
    <reaction evidence="1">
        <text>GTP + H2O = 7,8-dihydroneopterin 3'-triphosphate + formate + H(+)</text>
        <dbReference type="Rhea" id="RHEA:17473"/>
        <dbReference type="ChEBI" id="CHEBI:15377"/>
        <dbReference type="ChEBI" id="CHEBI:15378"/>
        <dbReference type="ChEBI" id="CHEBI:15740"/>
        <dbReference type="ChEBI" id="CHEBI:37565"/>
        <dbReference type="ChEBI" id="CHEBI:58462"/>
        <dbReference type="EC" id="3.5.4.16"/>
    </reaction>
</comment>
<comment type="pathway">
    <text evidence="1">Cofactor biosynthesis; 7,8-dihydroneopterin triphosphate biosynthesis; 7,8-dihydroneopterin triphosphate from GTP: step 1/1.</text>
</comment>
<comment type="similarity">
    <text evidence="1">Belongs to the GTP cyclohydrolase IV family.</text>
</comment>
<name>GCH4_NITV9</name>
<reference key="1">
    <citation type="submission" date="2008-10" db="EMBL/GenBank/DDBJ databases">
        <title>Complete sequence of Desulfovibrio vulgaris str. 'Miyazaki F'.</title>
        <authorList>
            <person name="Lucas S."/>
            <person name="Copeland A."/>
            <person name="Lapidus A."/>
            <person name="Glavina del Rio T."/>
            <person name="Dalin E."/>
            <person name="Tice H."/>
            <person name="Bruce D."/>
            <person name="Goodwin L."/>
            <person name="Pitluck S."/>
            <person name="Sims D."/>
            <person name="Brettin T."/>
            <person name="Detter J.C."/>
            <person name="Han C."/>
            <person name="Larimer F."/>
            <person name="Land M."/>
            <person name="Hauser L."/>
            <person name="Kyrpides N."/>
            <person name="Mikhailova N."/>
            <person name="Hazen T.C."/>
            <person name="Richardson P."/>
        </authorList>
    </citation>
    <scope>NUCLEOTIDE SEQUENCE [LARGE SCALE GENOMIC DNA]</scope>
    <source>
        <strain>DSM 19637 / Miyazaki F</strain>
    </source>
</reference>